<dbReference type="EMBL" id="CP000316">
    <property type="protein sequence ID" value="ABE45039.1"/>
    <property type="molecule type" value="Genomic_DNA"/>
</dbReference>
<dbReference type="RefSeq" id="WP_011484034.1">
    <property type="nucleotide sequence ID" value="NC_007948.1"/>
</dbReference>
<dbReference type="SMR" id="Q128K3"/>
<dbReference type="STRING" id="296591.Bpro_3125"/>
<dbReference type="KEGG" id="pol:Bpro_3125"/>
<dbReference type="eggNOG" id="COG0576">
    <property type="taxonomic scope" value="Bacteria"/>
</dbReference>
<dbReference type="HOGENOM" id="CLU_057217_6_1_4"/>
<dbReference type="OrthoDB" id="9789811at2"/>
<dbReference type="Proteomes" id="UP000001983">
    <property type="component" value="Chromosome"/>
</dbReference>
<dbReference type="GO" id="GO:0005829">
    <property type="term" value="C:cytosol"/>
    <property type="evidence" value="ECO:0007669"/>
    <property type="project" value="TreeGrafter"/>
</dbReference>
<dbReference type="GO" id="GO:0000774">
    <property type="term" value="F:adenyl-nucleotide exchange factor activity"/>
    <property type="evidence" value="ECO:0007669"/>
    <property type="project" value="InterPro"/>
</dbReference>
<dbReference type="GO" id="GO:0042803">
    <property type="term" value="F:protein homodimerization activity"/>
    <property type="evidence" value="ECO:0007669"/>
    <property type="project" value="InterPro"/>
</dbReference>
<dbReference type="GO" id="GO:0051087">
    <property type="term" value="F:protein-folding chaperone binding"/>
    <property type="evidence" value="ECO:0007669"/>
    <property type="project" value="InterPro"/>
</dbReference>
<dbReference type="GO" id="GO:0051082">
    <property type="term" value="F:unfolded protein binding"/>
    <property type="evidence" value="ECO:0007669"/>
    <property type="project" value="TreeGrafter"/>
</dbReference>
<dbReference type="GO" id="GO:0006457">
    <property type="term" value="P:protein folding"/>
    <property type="evidence" value="ECO:0007669"/>
    <property type="project" value="InterPro"/>
</dbReference>
<dbReference type="CDD" id="cd00446">
    <property type="entry name" value="GrpE"/>
    <property type="match status" value="1"/>
</dbReference>
<dbReference type="FunFam" id="2.30.22.10:FF:000001">
    <property type="entry name" value="Protein GrpE"/>
    <property type="match status" value="1"/>
</dbReference>
<dbReference type="Gene3D" id="3.90.20.20">
    <property type="match status" value="1"/>
</dbReference>
<dbReference type="Gene3D" id="2.30.22.10">
    <property type="entry name" value="Head domain of nucleotide exchange factor GrpE"/>
    <property type="match status" value="1"/>
</dbReference>
<dbReference type="HAMAP" id="MF_01151">
    <property type="entry name" value="GrpE"/>
    <property type="match status" value="1"/>
</dbReference>
<dbReference type="InterPro" id="IPR000740">
    <property type="entry name" value="GrpE"/>
</dbReference>
<dbReference type="InterPro" id="IPR013805">
    <property type="entry name" value="GrpE_coiled_coil"/>
</dbReference>
<dbReference type="InterPro" id="IPR009012">
    <property type="entry name" value="GrpE_head"/>
</dbReference>
<dbReference type="NCBIfam" id="NF010737">
    <property type="entry name" value="PRK14139.1"/>
    <property type="match status" value="1"/>
</dbReference>
<dbReference type="NCBIfam" id="NF010738">
    <property type="entry name" value="PRK14140.1"/>
    <property type="match status" value="1"/>
</dbReference>
<dbReference type="NCBIfam" id="NF010748">
    <property type="entry name" value="PRK14150.1"/>
    <property type="match status" value="1"/>
</dbReference>
<dbReference type="PANTHER" id="PTHR21237">
    <property type="entry name" value="GRPE PROTEIN"/>
    <property type="match status" value="1"/>
</dbReference>
<dbReference type="PANTHER" id="PTHR21237:SF23">
    <property type="entry name" value="GRPE PROTEIN HOMOLOG, MITOCHONDRIAL"/>
    <property type="match status" value="1"/>
</dbReference>
<dbReference type="Pfam" id="PF01025">
    <property type="entry name" value="GrpE"/>
    <property type="match status" value="1"/>
</dbReference>
<dbReference type="PRINTS" id="PR00773">
    <property type="entry name" value="GRPEPROTEIN"/>
</dbReference>
<dbReference type="SUPFAM" id="SSF58014">
    <property type="entry name" value="Coiled-coil domain of nucleotide exchange factor GrpE"/>
    <property type="match status" value="1"/>
</dbReference>
<dbReference type="SUPFAM" id="SSF51064">
    <property type="entry name" value="Head domain of nucleotide exchange factor GrpE"/>
    <property type="match status" value="1"/>
</dbReference>
<dbReference type="PROSITE" id="PS01071">
    <property type="entry name" value="GRPE"/>
    <property type="match status" value="1"/>
</dbReference>
<keyword id="KW-0143">Chaperone</keyword>
<keyword id="KW-0963">Cytoplasm</keyword>
<keyword id="KW-1185">Reference proteome</keyword>
<keyword id="KW-0346">Stress response</keyword>
<proteinExistence type="inferred from homology"/>
<reference key="1">
    <citation type="journal article" date="2008" name="Appl. Environ. Microbiol.">
        <title>The genome of Polaromonas sp. strain JS666: insights into the evolution of a hydrocarbon- and xenobiotic-degrading bacterium, and features of relevance to biotechnology.</title>
        <authorList>
            <person name="Mattes T.E."/>
            <person name="Alexander A.K."/>
            <person name="Richardson P.M."/>
            <person name="Munk A.C."/>
            <person name="Han C.S."/>
            <person name="Stothard P."/>
            <person name="Coleman N.V."/>
        </authorList>
    </citation>
    <scope>NUCLEOTIDE SEQUENCE [LARGE SCALE GENOMIC DNA]</scope>
    <source>
        <strain>JS666 / ATCC BAA-500</strain>
    </source>
</reference>
<gene>
    <name evidence="1" type="primary">grpE</name>
    <name type="ordered locus">Bpro_3125</name>
</gene>
<sequence>MSENTQPEQNQPLTGAPSPEELEAAQAANEFDALTQAQAELVTLQAKNTELADSYLRAKAETENARRRADDEIAKARKFALESFAESLLPVVDSLEAGLAHKDATPEQIREGADATLKQLKTTLERNKIVEINPASGSRFDPHQHQAISMVPAEQEANTVVSVLQKGYLISDRVLRPALVTVTAPK</sequence>
<feature type="chain" id="PRO_1000213672" description="Protein GrpE">
    <location>
        <begin position="1"/>
        <end position="186"/>
    </location>
</feature>
<feature type="region of interest" description="Disordered" evidence="2">
    <location>
        <begin position="1"/>
        <end position="22"/>
    </location>
</feature>
<feature type="compositionally biased region" description="Polar residues" evidence="2">
    <location>
        <begin position="1"/>
        <end position="13"/>
    </location>
</feature>
<protein>
    <recommendedName>
        <fullName evidence="1">Protein GrpE</fullName>
    </recommendedName>
    <alternativeName>
        <fullName evidence="1">HSP-70 cofactor</fullName>
    </alternativeName>
</protein>
<organism>
    <name type="scientific">Polaromonas sp. (strain JS666 / ATCC BAA-500)</name>
    <dbReference type="NCBI Taxonomy" id="296591"/>
    <lineage>
        <taxon>Bacteria</taxon>
        <taxon>Pseudomonadati</taxon>
        <taxon>Pseudomonadota</taxon>
        <taxon>Betaproteobacteria</taxon>
        <taxon>Burkholderiales</taxon>
        <taxon>Comamonadaceae</taxon>
        <taxon>Polaromonas</taxon>
    </lineage>
</organism>
<accession>Q128K3</accession>
<evidence type="ECO:0000255" key="1">
    <source>
        <dbReference type="HAMAP-Rule" id="MF_01151"/>
    </source>
</evidence>
<evidence type="ECO:0000256" key="2">
    <source>
        <dbReference type="SAM" id="MobiDB-lite"/>
    </source>
</evidence>
<comment type="function">
    <text evidence="1">Participates actively in the response to hyperosmotic and heat shock by preventing the aggregation of stress-denatured proteins, in association with DnaK and GrpE. It is the nucleotide exchange factor for DnaK and may function as a thermosensor. Unfolded proteins bind initially to DnaJ; upon interaction with the DnaJ-bound protein, DnaK hydrolyzes its bound ATP, resulting in the formation of a stable complex. GrpE releases ADP from DnaK; ATP binding to DnaK triggers the release of the substrate protein, thus completing the reaction cycle. Several rounds of ATP-dependent interactions between DnaJ, DnaK and GrpE are required for fully efficient folding.</text>
</comment>
<comment type="subunit">
    <text evidence="1">Homodimer.</text>
</comment>
<comment type="subcellular location">
    <subcellularLocation>
        <location evidence="1">Cytoplasm</location>
    </subcellularLocation>
</comment>
<comment type="similarity">
    <text evidence="1">Belongs to the GrpE family.</text>
</comment>
<name>GRPE_POLSJ</name>